<name>LRC31_HUMAN</name>
<keyword id="KW-0025">Alternative splicing</keyword>
<keyword id="KW-0433">Leucine-rich repeat</keyword>
<keyword id="KW-1267">Proteomics identification</keyword>
<keyword id="KW-1185">Reference proteome</keyword>
<keyword id="KW-0677">Repeat</keyword>
<dbReference type="EMBL" id="EU668335">
    <property type="protein sequence ID" value="ACF94488.1"/>
    <property type="molecule type" value="mRNA"/>
</dbReference>
<dbReference type="EMBL" id="AY358138">
    <property type="protein sequence ID" value="AAQ88505.1"/>
    <property type="molecule type" value="mRNA"/>
</dbReference>
<dbReference type="EMBL" id="AK026912">
    <property type="protein sequence ID" value="BAB15589.1"/>
    <property type="status" value="ALT_FRAME"/>
    <property type="molecule type" value="mRNA"/>
</dbReference>
<dbReference type="EMBL" id="AK097338">
    <property type="protein sequence ID" value="BAC05004.1"/>
    <property type="molecule type" value="mRNA"/>
</dbReference>
<dbReference type="EMBL" id="AC078795">
    <property type="status" value="NOT_ANNOTATED_CDS"/>
    <property type="molecule type" value="Genomic_DNA"/>
</dbReference>
<dbReference type="EMBL" id="BC117401">
    <property type="protein sequence ID" value="AAI17402.1"/>
    <property type="molecule type" value="mRNA"/>
</dbReference>
<dbReference type="EMBL" id="BC143569">
    <property type="protein sequence ID" value="AAI43570.1"/>
    <property type="molecule type" value="mRNA"/>
</dbReference>
<dbReference type="EMBL" id="BC143582">
    <property type="status" value="NOT_ANNOTATED_CDS"/>
    <property type="molecule type" value="mRNA"/>
</dbReference>
<dbReference type="CCDS" id="CCDS43167.1">
    <molecule id="Q6UY01-1"/>
</dbReference>
<dbReference type="CCDS" id="CCDS63832.1">
    <molecule id="Q6UY01-2"/>
</dbReference>
<dbReference type="CCDS" id="CCDS63833.1">
    <molecule id="Q6UY01-4"/>
</dbReference>
<dbReference type="RefSeq" id="NP_001264056.1">
    <molecule id="Q6UY01-4"/>
    <property type="nucleotide sequence ID" value="NM_001277127.2"/>
</dbReference>
<dbReference type="RefSeq" id="NP_001264057.1">
    <molecule id="Q6UY01-2"/>
    <property type="nucleotide sequence ID" value="NM_001277128.2"/>
</dbReference>
<dbReference type="RefSeq" id="NP_079003.2">
    <molecule id="Q6UY01-1"/>
    <property type="nucleotide sequence ID" value="NM_024727.4"/>
</dbReference>
<dbReference type="RefSeq" id="XP_011511462.1">
    <molecule id="Q6UY01-3"/>
    <property type="nucleotide sequence ID" value="XM_011513160.4"/>
</dbReference>
<dbReference type="RefSeq" id="XP_054203889.1">
    <molecule id="Q6UY01-3"/>
    <property type="nucleotide sequence ID" value="XM_054347914.1"/>
</dbReference>
<dbReference type="SMR" id="Q6UY01"/>
<dbReference type="BioGRID" id="122882">
    <property type="interactions" value="244"/>
</dbReference>
<dbReference type="FunCoup" id="Q6UY01">
    <property type="interactions" value="1"/>
</dbReference>
<dbReference type="IntAct" id="Q6UY01">
    <property type="interactions" value="5"/>
</dbReference>
<dbReference type="STRING" id="9606.ENSP00000325978"/>
<dbReference type="iPTMnet" id="Q6UY01"/>
<dbReference type="PhosphoSitePlus" id="Q6UY01"/>
<dbReference type="BioMuta" id="LRRC31"/>
<dbReference type="DMDM" id="74762376"/>
<dbReference type="jPOST" id="Q6UY01"/>
<dbReference type="MassIVE" id="Q6UY01"/>
<dbReference type="PaxDb" id="9606-ENSP00000325978"/>
<dbReference type="PeptideAtlas" id="Q6UY01"/>
<dbReference type="ProteomicsDB" id="16544"/>
<dbReference type="ProteomicsDB" id="67686">
    <molecule id="Q6UY01-1"/>
</dbReference>
<dbReference type="ProteomicsDB" id="67687">
    <molecule id="Q6UY01-2"/>
</dbReference>
<dbReference type="ProteomicsDB" id="67688">
    <molecule id="Q6UY01-3"/>
</dbReference>
<dbReference type="Pumba" id="Q6UY01"/>
<dbReference type="Antibodypedia" id="51015">
    <property type="antibodies" value="36 antibodies from 9 providers"/>
</dbReference>
<dbReference type="DNASU" id="79782"/>
<dbReference type="Ensembl" id="ENST00000264676.9">
    <molecule id="Q6UY01-2"/>
    <property type="protein sequence ID" value="ENSP00000264676.5"/>
    <property type="gene ID" value="ENSG00000114248.10"/>
</dbReference>
<dbReference type="Ensembl" id="ENST00000316428.10">
    <molecule id="Q6UY01-1"/>
    <property type="protein sequence ID" value="ENSP00000325978.5"/>
    <property type="gene ID" value="ENSG00000114248.10"/>
</dbReference>
<dbReference type="Ensembl" id="ENST00000523069.1">
    <molecule id="Q6UY01-4"/>
    <property type="protein sequence ID" value="ENSP00000429145.1"/>
    <property type="gene ID" value="ENSG00000114248.10"/>
</dbReference>
<dbReference type="GeneID" id="79782"/>
<dbReference type="KEGG" id="hsa:79782"/>
<dbReference type="MANE-Select" id="ENST00000316428.10">
    <property type="protein sequence ID" value="ENSP00000325978.5"/>
    <property type="RefSeq nucleotide sequence ID" value="NM_024727.4"/>
    <property type="RefSeq protein sequence ID" value="NP_079003.2"/>
</dbReference>
<dbReference type="UCSC" id="uc003fgc.3">
    <molecule id="Q6UY01-1"/>
    <property type="organism name" value="human"/>
</dbReference>
<dbReference type="AGR" id="HGNC:26261"/>
<dbReference type="CTD" id="79782"/>
<dbReference type="DisGeNET" id="79782"/>
<dbReference type="GeneCards" id="LRRC31"/>
<dbReference type="HGNC" id="HGNC:26261">
    <property type="gene designation" value="LRRC31"/>
</dbReference>
<dbReference type="HPA" id="ENSG00000114248">
    <property type="expression patterns" value="Tissue enhanced (intestine, salivary gland, stomach)"/>
</dbReference>
<dbReference type="MIM" id="620925">
    <property type="type" value="gene"/>
</dbReference>
<dbReference type="neXtProt" id="NX_Q6UY01"/>
<dbReference type="OpenTargets" id="ENSG00000114248"/>
<dbReference type="PharmGKB" id="PA134985943"/>
<dbReference type="VEuPathDB" id="HostDB:ENSG00000114248"/>
<dbReference type="eggNOG" id="KOG4308">
    <property type="taxonomic scope" value="Eukaryota"/>
</dbReference>
<dbReference type="GeneTree" id="ENSGT00730000111293"/>
<dbReference type="HOGENOM" id="CLU_036052_1_0_1"/>
<dbReference type="InParanoid" id="Q6UY01"/>
<dbReference type="OMA" id="CVTEEDM"/>
<dbReference type="OrthoDB" id="1394818at2759"/>
<dbReference type="PAN-GO" id="Q6UY01">
    <property type="GO annotations" value="0 GO annotations based on evolutionary models"/>
</dbReference>
<dbReference type="PhylomeDB" id="Q6UY01"/>
<dbReference type="TreeFam" id="TF331228"/>
<dbReference type="PathwayCommons" id="Q6UY01"/>
<dbReference type="SignaLink" id="Q6UY01"/>
<dbReference type="BioGRID-ORCS" id="79782">
    <property type="hits" value="9 hits in 1142 CRISPR screens"/>
</dbReference>
<dbReference type="ChiTaRS" id="LRRC31">
    <property type="organism name" value="human"/>
</dbReference>
<dbReference type="GenomeRNAi" id="79782"/>
<dbReference type="Pharos" id="Q6UY01">
    <property type="development level" value="Tdark"/>
</dbReference>
<dbReference type="PRO" id="PR:Q6UY01"/>
<dbReference type="Proteomes" id="UP000005640">
    <property type="component" value="Chromosome 3"/>
</dbReference>
<dbReference type="RNAct" id="Q6UY01">
    <property type="molecule type" value="protein"/>
</dbReference>
<dbReference type="Bgee" id="ENSG00000114248">
    <property type="expression patterns" value="Expressed in rectum and 52 other cell types or tissues"/>
</dbReference>
<dbReference type="ExpressionAtlas" id="Q6UY01">
    <property type="expression patterns" value="baseline and differential"/>
</dbReference>
<dbReference type="Gene3D" id="3.80.10.10">
    <property type="entry name" value="Ribonuclease Inhibitor"/>
    <property type="match status" value="2"/>
</dbReference>
<dbReference type="InterPro" id="IPR001611">
    <property type="entry name" value="Leu-rich_rpt"/>
</dbReference>
<dbReference type="InterPro" id="IPR042419">
    <property type="entry name" value="LRC31"/>
</dbReference>
<dbReference type="InterPro" id="IPR032675">
    <property type="entry name" value="LRR_dom_sf"/>
</dbReference>
<dbReference type="PANTHER" id="PTHR24109">
    <property type="entry name" value="LEUCINE-RICH REPEAT-CONTAINING PROTEIN 31"/>
    <property type="match status" value="1"/>
</dbReference>
<dbReference type="PANTHER" id="PTHR24109:SF3">
    <property type="entry name" value="LEUCINE-RICH REPEAT-CONTAINING PROTEIN 31"/>
    <property type="match status" value="1"/>
</dbReference>
<dbReference type="Pfam" id="PF13516">
    <property type="entry name" value="LRR_6"/>
    <property type="match status" value="1"/>
</dbReference>
<dbReference type="SMART" id="SM00368">
    <property type="entry name" value="LRR_RI"/>
    <property type="match status" value="7"/>
</dbReference>
<dbReference type="SUPFAM" id="SSF52047">
    <property type="entry name" value="RNI-like"/>
    <property type="match status" value="1"/>
</dbReference>
<feature type="chain" id="PRO_0000229922" description="Leucine-rich repeat-containing protein 31">
    <location>
        <begin position="1"/>
        <end position="552"/>
    </location>
</feature>
<feature type="repeat" description="LRR 1">
    <location>
        <begin position="227"/>
        <end position="246"/>
    </location>
</feature>
<feature type="repeat" description="LRR 2">
    <location>
        <begin position="255"/>
        <end position="275"/>
    </location>
</feature>
<feature type="repeat" description="LRR 3">
    <location>
        <begin position="283"/>
        <end position="293"/>
    </location>
</feature>
<feature type="repeat" description="LRR 4">
    <location>
        <begin position="311"/>
        <end position="331"/>
    </location>
</feature>
<feature type="repeat" description="LRR 5">
    <location>
        <begin position="339"/>
        <end position="360"/>
    </location>
</feature>
<feature type="repeat" description="LRR 6">
    <location>
        <begin position="367"/>
        <end position="387"/>
    </location>
</feature>
<feature type="repeat" description="LRR 7">
    <location>
        <begin position="395"/>
        <end position="415"/>
    </location>
</feature>
<feature type="repeat" description="LRR 8">
    <location>
        <begin position="423"/>
        <end position="443"/>
    </location>
</feature>
<feature type="repeat" description="LRR 9">
    <location>
        <begin position="453"/>
        <end position="475"/>
    </location>
</feature>
<feature type="region of interest" description="Disordered" evidence="1">
    <location>
        <begin position="1"/>
        <end position="65"/>
    </location>
</feature>
<feature type="compositionally biased region" description="Basic and acidic residues" evidence="1">
    <location>
        <begin position="31"/>
        <end position="41"/>
    </location>
</feature>
<feature type="compositionally biased region" description="Polar residues" evidence="1">
    <location>
        <begin position="42"/>
        <end position="58"/>
    </location>
</feature>
<feature type="splice variant" id="VSP_017797" description="In isoform 2." evidence="2">
    <location>
        <begin position="107"/>
        <end position="162"/>
    </location>
</feature>
<feature type="splice variant" id="VSP_017798" description="In isoform 3." evidence="2">
    <original>TQVIPLLSNLQELDLS</original>
    <variation>NSYLSIWENGKNSRLS</variation>
    <location>
        <begin position="331"/>
        <end position="346"/>
    </location>
</feature>
<feature type="splice variant" id="VSP_017799" description="In isoform 3." evidence="2">
    <location>
        <begin position="347"/>
        <end position="552"/>
    </location>
</feature>
<feature type="splice variant" id="VSP_055910" description="In isoform 4." evidence="3">
    <original>A</original>
    <variation>E</variation>
    <location>
        <position position="443"/>
    </location>
</feature>
<feature type="splice variant" id="VSP_055911" description="In isoform 4." evidence="3">
    <location>
        <begin position="444"/>
        <end position="552"/>
    </location>
</feature>
<feature type="sequence variant" id="VAR_034085" description="In dbSNP:rs35923425.">
    <original>L</original>
    <variation>F</variation>
    <location>
        <position position="322"/>
    </location>
</feature>
<feature type="sequence variant" id="VAR_051111" description="In dbSNP:rs3732452.">
    <original>A</original>
    <variation>E</variation>
    <location>
        <position position="324"/>
    </location>
</feature>
<feature type="sequence variant" id="VAR_051112" description="In dbSNP:rs35923425.">
    <original>L</original>
    <variation>F</variation>
    <location>
        <position position="378"/>
    </location>
</feature>
<feature type="sequence conflict" description="In Ref. 3; BAB15589." evidence="4" ref="3">
    <original>K</original>
    <variation>E</variation>
    <location>
        <position position="412"/>
    </location>
</feature>
<proteinExistence type="evidence at protein level"/>
<comment type="alternative products">
    <event type="alternative splicing"/>
    <isoform>
        <id>Q6UY01-1</id>
        <name>1</name>
        <sequence type="displayed"/>
    </isoform>
    <isoform>
        <id>Q6UY01-2</id>
        <name>2</name>
        <sequence type="described" ref="VSP_017797"/>
    </isoform>
    <isoform>
        <id>Q6UY01-3</id>
        <name>3</name>
        <sequence type="described" ref="VSP_017798 VSP_017799"/>
    </isoform>
    <isoform>
        <id>Q6UY01-4</id>
        <name>4</name>
        <sequence type="described" ref="VSP_055910 VSP_055911"/>
    </isoform>
</comment>
<comment type="sequence caution" evidence="4">
    <conflict type="frameshift">
        <sequence resource="EMBL-CDS" id="BAB15589"/>
    </conflict>
</comment>
<comment type="sequence caution" evidence="4">
    <molecule>Isoform 2</molecule>
    <conflict type="frameshift">
        <sequence resource="EMBL-CDS" id="BAB15589"/>
    </conflict>
</comment>
<organism>
    <name type="scientific">Homo sapiens</name>
    <name type="common">Human</name>
    <dbReference type="NCBI Taxonomy" id="9606"/>
    <lineage>
        <taxon>Eukaryota</taxon>
        <taxon>Metazoa</taxon>
        <taxon>Chordata</taxon>
        <taxon>Craniata</taxon>
        <taxon>Vertebrata</taxon>
        <taxon>Euteleostomi</taxon>
        <taxon>Mammalia</taxon>
        <taxon>Eutheria</taxon>
        <taxon>Euarchontoglires</taxon>
        <taxon>Primates</taxon>
        <taxon>Haplorrhini</taxon>
        <taxon>Catarrhini</taxon>
        <taxon>Hominidae</taxon>
        <taxon>Homo</taxon>
    </lineage>
</organism>
<evidence type="ECO:0000256" key="1">
    <source>
        <dbReference type="SAM" id="MobiDB-lite"/>
    </source>
</evidence>
<evidence type="ECO:0000303" key="2">
    <source>
    </source>
</evidence>
<evidence type="ECO:0000303" key="3">
    <source>
    </source>
</evidence>
<evidence type="ECO:0000305" key="4"/>
<sequence length="552" mass="61489">MSQTRKKTSSEGETKPQTSTVNKFLRGSNAESRKEDNDLKTSDSQPSDWIQKTATSETAKPLSSEMEWRSSMEKNEHFLQKLGKKAVNKCLDLNNCGLTTADMKEMVALLPFLPDLEELDISWNGFVGGTLLSITQQMHLVSKLKILRLGSCRLTTDDVQALGEAFEMIPELEELNLSWNSKVGGNLPLILQKFQKGSKIQMIELVDCSLTSEDGTFLGQLLPMLQSLEVLDLSINRDIVGSLNSIAQGLKSTSNLKVLKLHSCGLSQKSVKILDAAFRYLGELRKLDLSCNKDLGGGFEDSPAQLVMLKHLQVLDLHQCSLTADDVMSLTQVIPLLSNLQELDLSANKKMGSSSENLLSRLRFLPALKSLVINNCALESETFTALAEASVHLSALEVFNLSWNKCVGGNLKLLLETLKLSMSLQVLRLSSCSLVTEDVALLASVIQTGHLAKLQKLDLSYNDSICDAGWTMFCQNVRFLKELIELDISLRPSNFRDCGQWFRHLLYAVTKLPQITEIGMKRWILPASQEEELECFDQDKKRSIHFDHGGFQ</sequence>
<protein>
    <recommendedName>
        <fullName>Leucine-rich repeat-containing protein 31</fullName>
    </recommendedName>
</protein>
<accession>Q6UY01</accession>
<accession>B7ZL44</accession>
<accession>E5RJA9</accession>
<accession>Q17RA3</accession>
<accession>Q8N848</accession>
<accession>Q9H5N5</accession>
<accession>V9HW14</accession>
<reference key="1">
    <citation type="submission" date="2008-04" db="EMBL/GenBank/DDBJ databases">
        <authorList>
            <person name="Li J.Y."/>
            <person name="Wang H.Y."/>
            <person name="Liu F.J."/>
            <person name="Liu J."/>
        </authorList>
    </citation>
    <scope>NUCLEOTIDE SEQUENCE [MRNA] (ISOFORM 1)</scope>
</reference>
<reference key="2">
    <citation type="journal article" date="2003" name="Genome Res.">
        <title>The secreted protein discovery initiative (SPDI), a large-scale effort to identify novel human secreted and transmembrane proteins: a bioinformatics assessment.</title>
        <authorList>
            <person name="Clark H.F."/>
            <person name="Gurney A.L."/>
            <person name="Abaya E."/>
            <person name="Baker K."/>
            <person name="Baldwin D.T."/>
            <person name="Brush J."/>
            <person name="Chen J."/>
            <person name="Chow B."/>
            <person name="Chui C."/>
            <person name="Crowley C."/>
            <person name="Currell B."/>
            <person name="Deuel B."/>
            <person name="Dowd P."/>
            <person name="Eaton D."/>
            <person name="Foster J.S."/>
            <person name="Grimaldi C."/>
            <person name="Gu Q."/>
            <person name="Hass P.E."/>
            <person name="Heldens S."/>
            <person name="Huang A."/>
            <person name="Kim H.S."/>
            <person name="Klimowski L."/>
            <person name="Jin Y."/>
            <person name="Johnson S."/>
            <person name="Lee J."/>
            <person name="Lewis L."/>
            <person name="Liao D."/>
            <person name="Mark M.R."/>
            <person name="Robbie E."/>
            <person name="Sanchez C."/>
            <person name="Schoenfeld J."/>
            <person name="Seshagiri S."/>
            <person name="Simmons L."/>
            <person name="Singh J."/>
            <person name="Smith V."/>
            <person name="Stinson J."/>
            <person name="Vagts A."/>
            <person name="Vandlen R.L."/>
            <person name="Watanabe C."/>
            <person name="Wieand D."/>
            <person name="Woods K."/>
            <person name="Xie M.-H."/>
            <person name="Yansura D.G."/>
            <person name="Yi S."/>
            <person name="Yu G."/>
            <person name="Yuan J."/>
            <person name="Zhang M."/>
            <person name="Zhang Z."/>
            <person name="Goddard A.D."/>
            <person name="Wood W.I."/>
            <person name="Godowski P.J."/>
            <person name="Gray A.M."/>
        </authorList>
    </citation>
    <scope>NUCLEOTIDE SEQUENCE [LARGE SCALE MRNA] (ISOFORM 1)</scope>
</reference>
<reference key="3">
    <citation type="journal article" date="2004" name="Nat. Genet.">
        <title>Complete sequencing and characterization of 21,243 full-length human cDNAs.</title>
        <authorList>
            <person name="Ota T."/>
            <person name="Suzuki Y."/>
            <person name="Nishikawa T."/>
            <person name="Otsuki T."/>
            <person name="Sugiyama T."/>
            <person name="Irie R."/>
            <person name="Wakamatsu A."/>
            <person name="Hayashi K."/>
            <person name="Sato H."/>
            <person name="Nagai K."/>
            <person name="Kimura K."/>
            <person name="Makita H."/>
            <person name="Sekine M."/>
            <person name="Obayashi M."/>
            <person name="Nishi T."/>
            <person name="Shibahara T."/>
            <person name="Tanaka T."/>
            <person name="Ishii S."/>
            <person name="Yamamoto J."/>
            <person name="Saito K."/>
            <person name="Kawai Y."/>
            <person name="Isono Y."/>
            <person name="Nakamura Y."/>
            <person name="Nagahari K."/>
            <person name="Murakami K."/>
            <person name="Yasuda T."/>
            <person name="Iwayanagi T."/>
            <person name="Wagatsuma M."/>
            <person name="Shiratori A."/>
            <person name="Sudo H."/>
            <person name="Hosoiri T."/>
            <person name="Kaku Y."/>
            <person name="Kodaira H."/>
            <person name="Kondo H."/>
            <person name="Sugawara M."/>
            <person name="Takahashi M."/>
            <person name="Kanda K."/>
            <person name="Yokoi T."/>
            <person name="Furuya T."/>
            <person name="Kikkawa E."/>
            <person name="Omura Y."/>
            <person name="Abe K."/>
            <person name="Kamihara K."/>
            <person name="Katsuta N."/>
            <person name="Sato K."/>
            <person name="Tanikawa M."/>
            <person name="Yamazaki M."/>
            <person name="Ninomiya K."/>
            <person name="Ishibashi T."/>
            <person name="Yamashita H."/>
            <person name="Murakawa K."/>
            <person name="Fujimori K."/>
            <person name="Tanai H."/>
            <person name="Kimata M."/>
            <person name="Watanabe M."/>
            <person name="Hiraoka S."/>
            <person name="Chiba Y."/>
            <person name="Ishida S."/>
            <person name="Ono Y."/>
            <person name="Takiguchi S."/>
            <person name="Watanabe S."/>
            <person name="Yosida M."/>
            <person name="Hotuta T."/>
            <person name="Kusano J."/>
            <person name="Kanehori K."/>
            <person name="Takahashi-Fujii A."/>
            <person name="Hara H."/>
            <person name="Tanase T.-O."/>
            <person name="Nomura Y."/>
            <person name="Togiya S."/>
            <person name="Komai F."/>
            <person name="Hara R."/>
            <person name="Takeuchi K."/>
            <person name="Arita M."/>
            <person name="Imose N."/>
            <person name="Musashino K."/>
            <person name="Yuuki H."/>
            <person name="Oshima A."/>
            <person name="Sasaki N."/>
            <person name="Aotsuka S."/>
            <person name="Yoshikawa Y."/>
            <person name="Matsunawa H."/>
            <person name="Ichihara T."/>
            <person name="Shiohata N."/>
            <person name="Sano S."/>
            <person name="Moriya S."/>
            <person name="Momiyama H."/>
            <person name="Satoh N."/>
            <person name="Takami S."/>
            <person name="Terashima Y."/>
            <person name="Suzuki O."/>
            <person name="Nakagawa S."/>
            <person name="Senoh A."/>
            <person name="Mizoguchi H."/>
            <person name="Goto Y."/>
            <person name="Shimizu F."/>
            <person name="Wakebe H."/>
            <person name="Hishigaki H."/>
            <person name="Watanabe T."/>
            <person name="Sugiyama A."/>
            <person name="Takemoto M."/>
            <person name="Kawakami B."/>
            <person name="Yamazaki M."/>
            <person name="Watanabe K."/>
            <person name="Kumagai A."/>
            <person name="Itakura S."/>
            <person name="Fukuzumi Y."/>
            <person name="Fujimori Y."/>
            <person name="Komiyama M."/>
            <person name="Tashiro H."/>
            <person name="Tanigami A."/>
            <person name="Fujiwara T."/>
            <person name="Ono T."/>
            <person name="Yamada K."/>
            <person name="Fujii Y."/>
            <person name="Ozaki K."/>
            <person name="Hirao M."/>
            <person name="Ohmori Y."/>
            <person name="Kawabata A."/>
            <person name="Hikiji T."/>
            <person name="Kobatake N."/>
            <person name="Inagaki H."/>
            <person name="Ikema Y."/>
            <person name="Okamoto S."/>
            <person name="Okitani R."/>
            <person name="Kawakami T."/>
            <person name="Noguchi S."/>
            <person name="Itoh T."/>
            <person name="Shigeta K."/>
            <person name="Senba T."/>
            <person name="Matsumura K."/>
            <person name="Nakajima Y."/>
            <person name="Mizuno T."/>
            <person name="Morinaga M."/>
            <person name="Sasaki M."/>
            <person name="Togashi T."/>
            <person name="Oyama M."/>
            <person name="Hata H."/>
            <person name="Watanabe M."/>
            <person name="Komatsu T."/>
            <person name="Mizushima-Sugano J."/>
            <person name="Satoh T."/>
            <person name="Shirai Y."/>
            <person name="Takahashi Y."/>
            <person name="Nakagawa K."/>
            <person name="Okumura K."/>
            <person name="Nagase T."/>
            <person name="Nomura N."/>
            <person name="Kikuchi H."/>
            <person name="Masuho Y."/>
            <person name="Yamashita R."/>
            <person name="Nakai K."/>
            <person name="Yada T."/>
            <person name="Nakamura Y."/>
            <person name="Ohara O."/>
            <person name="Isogai T."/>
            <person name="Sugano S."/>
        </authorList>
    </citation>
    <scope>NUCLEOTIDE SEQUENCE [LARGE SCALE MRNA] (ISOFORMS 2 AND 3)</scope>
    <source>
        <tissue>Colon</tissue>
        <tissue>Stomach</tissue>
    </source>
</reference>
<reference key="4">
    <citation type="journal article" date="2006" name="Nature">
        <title>The DNA sequence, annotation and analysis of human chromosome 3.</title>
        <authorList>
            <person name="Muzny D.M."/>
            <person name="Scherer S.E."/>
            <person name="Kaul R."/>
            <person name="Wang J."/>
            <person name="Yu J."/>
            <person name="Sudbrak R."/>
            <person name="Buhay C.J."/>
            <person name="Chen R."/>
            <person name="Cree A."/>
            <person name="Ding Y."/>
            <person name="Dugan-Rocha S."/>
            <person name="Gill R."/>
            <person name="Gunaratne P."/>
            <person name="Harris R.A."/>
            <person name="Hawes A.C."/>
            <person name="Hernandez J."/>
            <person name="Hodgson A.V."/>
            <person name="Hume J."/>
            <person name="Jackson A."/>
            <person name="Khan Z.M."/>
            <person name="Kovar-Smith C."/>
            <person name="Lewis L.R."/>
            <person name="Lozado R.J."/>
            <person name="Metzker M.L."/>
            <person name="Milosavljevic A."/>
            <person name="Miner G.R."/>
            <person name="Morgan M.B."/>
            <person name="Nazareth L.V."/>
            <person name="Scott G."/>
            <person name="Sodergren E."/>
            <person name="Song X.-Z."/>
            <person name="Steffen D."/>
            <person name="Wei S."/>
            <person name="Wheeler D.A."/>
            <person name="Wright M.W."/>
            <person name="Worley K.C."/>
            <person name="Yuan Y."/>
            <person name="Zhang Z."/>
            <person name="Adams C.Q."/>
            <person name="Ansari-Lari M.A."/>
            <person name="Ayele M."/>
            <person name="Brown M.J."/>
            <person name="Chen G."/>
            <person name="Chen Z."/>
            <person name="Clendenning J."/>
            <person name="Clerc-Blankenburg K.P."/>
            <person name="Chen R."/>
            <person name="Chen Z."/>
            <person name="Davis C."/>
            <person name="Delgado O."/>
            <person name="Dinh H.H."/>
            <person name="Dong W."/>
            <person name="Draper H."/>
            <person name="Ernst S."/>
            <person name="Fu G."/>
            <person name="Gonzalez-Garay M.L."/>
            <person name="Garcia D.K."/>
            <person name="Gillett W."/>
            <person name="Gu J."/>
            <person name="Hao B."/>
            <person name="Haugen E."/>
            <person name="Havlak P."/>
            <person name="He X."/>
            <person name="Hennig S."/>
            <person name="Hu S."/>
            <person name="Huang W."/>
            <person name="Jackson L.R."/>
            <person name="Jacob L.S."/>
            <person name="Kelly S.H."/>
            <person name="Kube M."/>
            <person name="Levy R."/>
            <person name="Li Z."/>
            <person name="Liu B."/>
            <person name="Liu J."/>
            <person name="Liu W."/>
            <person name="Lu J."/>
            <person name="Maheshwari M."/>
            <person name="Nguyen B.-V."/>
            <person name="Okwuonu G.O."/>
            <person name="Palmeiri A."/>
            <person name="Pasternak S."/>
            <person name="Perez L.M."/>
            <person name="Phelps K.A."/>
            <person name="Plopper F.J."/>
            <person name="Qiang B."/>
            <person name="Raymond C."/>
            <person name="Rodriguez R."/>
            <person name="Saenphimmachak C."/>
            <person name="Santibanez J."/>
            <person name="Shen H."/>
            <person name="Shen Y."/>
            <person name="Subramanian S."/>
            <person name="Tabor P.E."/>
            <person name="Verduzco D."/>
            <person name="Waldron L."/>
            <person name="Wang J."/>
            <person name="Wang J."/>
            <person name="Wang Q."/>
            <person name="Williams G.A."/>
            <person name="Wong G.K.-S."/>
            <person name="Yao Z."/>
            <person name="Zhang J."/>
            <person name="Zhang X."/>
            <person name="Zhao G."/>
            <person name="Zhou J."/>
            <person name="Zhou Y."/>
            <person name="Nelson D."/>
            <person name="Lehrach H."/>
            <person name="Reinhardt R."/>
            <person name="Naylor S.L."/>
            <person name="Yang H."/>
            <person name="Olson M."/>
            <person name="Weinstock G."/>
            <person name="Gibbs R.A."/>
        </authorList>
    </citation>
    <scope>NUCLEOTIDE SEQUENCE [LARGE SCALE GENOMIC DNA]</scope>
</reference>
<reference key="5">
    <citation type="journal article" date="2004" name="Genome Res.">
        <title>The status, quality, and expansion of the NIH full-length cDNA project: the Mammalian Gene Collection (MGC).</title>
        <authorList>
            <consortium name="The MGC Project Team"/>
        </authorList>
    </citation>
    <scope>NUCLEOTIDE SEQUENCE [LARGE SCALE MRNA] (ISOFORMS 1 AND 4)</scope>
    <source>
        <tissue>Liver</tissue>
    </source>
</reference>
<gene>
    <name type="primary">LRRC31</name>
    <name type="ORF">UNQ9367/PRO34156</name>
</gene>